<accession>Q5ZJU3</accession>
<keyword id="KW-0028">Amino-acid biosynthesis</keyword>
<keyword id="KW-0061">Asparagine biosynthesis</keyword>
<keyword id="KW-0067">ATP-binding</keyword>
<keyword id="KW-0315">Glutamine amidotransferase</keyword>
<keyword id="KW-0436">Ligase</keyword>
<keyword id="KW-0547">Nucleotide-binding</keyword>
<keyword id="KW-1185">Reference proteome</keyword>
<reference key="1">
    <citation type="journal article" date="2005" name="Genome Biol.">
        <title>Full-length cDNAs from chicken bursal lymphocytes to facilitate gene function analysis.</title>
        <authorList>
            <person name="Caldwell R.B."/>
            <person name="Kierzek A.M."/>
            <person name="Arakawa H."/>
            <person name="Bezzubov Y."/>
            <person name="Zaim J."/>
            <person name="Fiedler P."/>
            <person name="Kutter S."/>
            <person name="Blagodatski A."/>
            <person name="Kostovska D."/>
            <person name="Koter M."/>
            <person name="Plachy J."/>
            <person name="Carninci P."/>
            <person name="Hayashizaki Y."/>
            <person name="Buerstedde J.-M."/>
        </authorList>
    </citation>
    <scope>NUCLEOTIDE SEQUENCE [LARGE SCALE MRNA]</scope>
    <source>
        <strain>CB</strain>
        <tissue>Bursa of Fabricius</tissue>
    </source>
</reference>
<comment type="catalytic activity">
    <reaction>
        <text>L-aspartate + L-glutamine + ATP + H2O = L-asparagine + L-glutamate + AMP + diphosphate + H(+)</text>
        <dbReference type="Rhea" id="RHEA:12228"/>
        <dbReference type="ChEBI" id="CHEBI:15377"/>
        <dbReference type="ChEBI" id="CHEBI:15378"/>
        <dbReference type="ChEBI" id="CHEBI:29985"/>
        <dbReference type="ChEBI" id="CHEBI:29991"/>
        <dbReference type="ChEBI" id="CHEBI:30616"/>
        <dbReference type="ChEBI" id="CHEBI:33019"/>
        <dbReference type="ChEBI" id="CHEBI:58048"/>
        <dbReference type="ChEBI" id="CHEBI:58359"/>
        <dbReference type="ChEBI" id="CHEBI:456215"/>
        <dbReference type="EC" id="6.3.5.4"/>
    </reaction>
</comment>
<comment type="pathway">
    <text>Amino-acid biosynthesis; L-asparagine biosynthesis; L-asparagine from L-aspartate (L-Gln route): step 1/1.</text>
</comment>
<sequence>MCGIWALFGSDECLSVQCLSAMKIAHRGPDAFRFENVNGFTNCCFGFHRLAVVDQLYGMQPIRVKKFPYLWLCYNGEIYNFKQLQEQFGFEYQTLVDGEVILHLYNRGGIEQTASMLDGVFAFILLDTANRKVFLARDTYGVRPLFKVLTDDGFLGVCSEAKGLINLKHSTSLFPKVEPFLPGHYEVLDLKPSGKVVSVEVVKFHSYKDEPLHAACDTVGNLPSGFDLETVKSNIRVLFENAVRKRLMAHRRIGCLLSGGLDSSLVAAVLLKLMKEMNIKYPLQTFAIGMENSPDLLAARKVAAHIGSEHHEVIFNSEEGIQAVEEVIFSLETYDITTVRASIGMYLVSKYIRKKTDSVVIFSGEGSDELTQGYIYFHKAPSPEEAAEESERLLKELYLFDVLRADRTTAAHGLELRVPFLDHRFTSYYLSLPAELRIPKNGIEKYLLRQSFEDSNLLPKEILWRPKEAFSDGIASVKKSWFSILQDYIDQQVDDLLLEKAAEKYPFNPPRTKESYYYRQIFEKHYPGRSSWLPHYWMPRWVEATDPSARTLKHYKSAIQE</sequence>
<proteinExistence type="evidence at transcript level"/>
<organism>
    <name type="scientific">Gallus gallus</name>
    <name type="common">Chicken</name>
    <dbReference type="NCBI Taxonomy" id="9031"/>
    <lineage>
        <taxon>Eukaryota</taxon>
        <taxon>Metazoa</taxon>
        <taxon>Chordata</taxon>
        <taxon>Craniata</taxon>
        <taxon>Vertebrata</taxon>
        <taxon>Euteleostomi</taxon>
        <taxon>Archelosauria</taxon>
        <taxon>Archosauria</taxon>
        <taxon>Dinosauria</taxon>
        <taxon>Saurischia</taxon>
        <taxon>Theropoda</taxon>
        <taxon>Coelurosauria</taxon>
        <taxon>Aves</taxon>
        <taxon>Neognathae</taxon>
        <taxon>Galloanserae</taxon>
        <taxon>Galliformes</taxon>
        <taxon>Phasianidae</taxon>
        <taxon>Phasianinae</taxon>
        <taxon>Gallus</taxon>
    </lineage>
</organism>
<dbReference type="EC" id="6.3.5.4"/>
<dbReference type="EMBL" id="AJ720341">
    <property type="protein sequence ID" value="CAG32000.1"/>
    <property type="molecule type" value="mRNA"/>
</dbReference>
<dbReference type="RefSeq" id="NP_001026148.1">
    <property type="nucleotide sequence ID" value="NM_001030977.2"/>
</dbReference>
<dbReference type="RefSeq" id="XP_015136881.2">
    <property type="nucleotide sequence ID" value="XM_015281395.4"/>
</dbReference>
<dbReference type="RefSeq" id="XP_015136882.2">
    <property type="nucleotide sequence ID" value="XM_015281396.4"/>
</dbReference>
<dbReference type="RefSeq" id="XP_015136883.2">
    <property type="nucleotide sequence ID" value="XM_015281397.4"/>
</dbReference>
<dbReference type="RefSeq" id="XP_040537063.1">
    <property type="nucleotide sequence ID" value="XM_040681129.2"/>
</dbReference>
<dbReference type="RefSeq" id="XP_046778050.1">
    <property type="nucleotide sequence ID" value="XM_046922094.1"/>
</dbReference>
<dbReference type="RefSeq" id="XP_046778052.1">
    <property type="nucleotide sequence ID" value="XM_046922096.1"/>
</dbReference>
<dbReference type="SMR" id="Q5ZJU3"/>
<dbReference type="BioGRID" id="681517">
    <property type="interactions" value="1"/>
</dbReference>
<dbReference type="FunCoup" id="Q5ZJU3">
    <property type="interactions" value="570"/>
</dbReference>
<dbReference type="STRING" id="9031.ENSGALP00000015846"/>
<dbReference type="MEROPS" id="C44.001"/>
<dbReference type="PaxDb" id="9031-ENSGALP00000015846"/>
<dbReference type="Ensembl" id="ENSGALT00010007889.1">
    <property type="protein sequence ID" value="ENSGALP00010004735.1"/>
    <property type="gene ID" value="ENSGALG00010003382.1"/>
</dbReference>
<dbReference type="GeneID" id="420574"/>
<dbReference type="KEGG" id="gga:420574"/>
<dbReference type="CTD" id="440"/>
<dbReference type="VEuPathDB" id="HostDB:geneid_420574"/>
<dbReference type="eggNOG" id="KOG0571">
    <property type="taxonomic scope" value="Eukaryota"/>
</dbReference>
<dbReference type="GeneTree" id="ENSGT00390000001994"/>
<dbReference type="InParanoid" id="Q5ZJU3"/>
<dbReference type="OMA" id="GIVCAFD"/>
<dbReference type="OrthoDB" id="409189at2759"/>
<dbReference type="PhylomeDB" id="Q5ZJU3"/>
<dbReference type="UniPathway" id="UPA00134">
    <property type="reaction ID" value="UER00195"/>
</dbReference>
<dbReference type="PRO" id="PR:Q5ZJU3"/>
<dbReference type="Proteomes" id="UP000000539">
    <property type="component" value="Chromosome 2"/>
</dbReference>
<dbReference type="GO" id="GO:0005829">
    <property type="term" value="C:cytosol"/>
    <property type="evidence" value="ECO:0000318"/>
    <property type="project" value="GO_Central"/>
</dbReference>
<dbReference type="GO" id="GO:0004066">
    <property type="term" value="F:asparagine synthase (glutamine-hydrolyzing) activity"/>
    <property type="evidence" value="ECO:0000318"/>
    <property type="project" value="GO_Central"/>
</dbReference>
<dbReference type="GO" id="GO:0005524">
    <property type="term" value="F:ATP binding"/>
    <property type="evidence" value="ECO:0007669"/>
    <property type="project" value="UniProtKB-KW"/>
</dbReference>
<dbReference type="GO" id="GO:0006529">
    <property type="term" value="P:asparagine biosynthetic process"/>
    <property type="evidence" value="ECO:0000318"/>
    <property type="project" value="GO_Central"/>
</dbReference>
<dbReference type="GO" id="GO:0042149">
    <property type="term" value="P:cellular response to glucose starvation"/>
    <property type="evidence" value="ECO:0007669"/>
    <property type="project" value="Ensembl"/>
</dbReference>
<dbReference type="GO" id="GO:0070981">
    <property type="term" value="P:L-asparagine biosynthetic process"/>
    <property type="evidence" value="ECO:0007669"/>
    <property type="project" value="UniProtKB-UniPathway"/>
</dbReference>
<dbReference type="GO" id="GO:0043066">
    <property type="term" value="P:negative regulation of apoptotic process"/>
    <property type="evidence" value="ECO:0007669"/>
    <property type="project" value="Ensembl"/>
</dbReference>
<dbReference type="GO" id="GO:0045931">
    <property type="term" value="P:positive regulation of mitotic cell cycle"/>
    <property type="evidence" value="ECO:0007669"/>
    <property type="project" value="Ensembl"/>
</dbReference>
<dbReference type="CDD" id="cd01991">
    <property type="entry name" value="Asn_synthase_B_C"/>
    <property type="match status" value="1"/>
</dbReference>
<dbReference type="CDD" id="cd00712">
    <property type="entry name" value="AsnB"/>
    <property type="match status" value="1"/>
</dbReference>
<dbReference type="FunFam" id="3.60.20.10:FF:000039">
    <property type="entry name" value="Asparagine synthetase [glutamine-hydrolyzing]"/>
    <property type="match status" value="1"/>
</dbReference>
<dbReference type="FunFam" id="3.40.50.620:FF:000090">
    <property type="entry name" value="asparagine synthetase [glutamine-hydrolyzing]"/>
    <property type="match status" value="1"/>
</dbReference>
<dbReference type="Gene3D" id="3.60.20.10">
    <property type="entry name" value="Glutamine Phosphoribosylpyrophosphate, subunit 1, domain 1"/>
    <property type="match status" value="1"/>
</dbReference>
<dbReference type="Gene3D" id="3.40.50.620">
    <property type="entry name" value="HUPs"/>
    <property type="match status" value="1"/>
</dbReference>
<dbReference type="InterPro" id="IPR006426">
    <property type="entry name" value="Asn_synth_AEB"/>
</dbReference>
<dbReference type="InterPro" id="IPR001962">
    <property type="entry name" value="Asn_synthase"/>
</dbReference>
<dbReference type="InterPro" id="IPR050795">
    <property type="entry name" value="Asn_Synthetase"/>
</dbReference>
<dbReference type="InterPro" id="IPR033738">
    <property type="entry name" value="AsnB_N"/>
</dbReference>
<dbReference type="InterPro" id="IPR017932">
    <property type="entry name" value="GATase_2_dom"/>
</dbReference>
<dbReference type="InterPro" id="IPR029055">
    <property type="entry name" value="Ntn_hydrolases_N"/>
</dbReference>
<dbReference type="InterPro" id="IPR014729">
    <property type="entry name" value="Rossmann-like_a/b/a_fold"/>
</dbReference>
<dbReference type="NCBIfam" id="TIGR01536">
    <property type="entry name" value="asn_synth_AEB"/>
    <property type="match status" value="1"/>
</dbReference>
<dbReference type="PANTHER" id="PTHR11772">
    <property type="entry name" value="ASPARAGINE SYNTHETASE"/>
    <property type="match status" value="1"/>
</dbReference>
<dbReference type="PANTHER" id="PTHR11772:SF23">
    <property type="entry name" value="ASPARAGINE SYNTHETASE [GLUTAMINE-HYDROLYZING]"/>
    <property type="match status" value="1"/>
</dbReference>
<dbReference type="Pfam" id="PF00733">
    <property type="entry name" value="Asn_synthase"/>
    <property type="match status" value="2"/>
</dbReference>
<dbReference type="Pfam" id="PF13537">
    <property type="entry name" value="GATase_7"/>
    <property type="match status" value="1"/>
</dbReference>
<dbReference type="PIRSF" id="PIRSF001589">
    <property type="entry name" value="Asn_synthetase_glu-h"/>
    <property type="match status" value="1"/>
</dbReference>
<dbReference type="SUPFAM" id="SSF52402">
    <property type="entry name" value="Adenine nucleotide alpha hydrolases-like"/>
    <property type="match status" value="1"/>
</dbReference>
<dbReference type="SUPFAM" id="SSF56235">
    <property type="entry name" value="N-terminal nucleophile aminohydrolases (Ntn hydrolases)"/>
    <property type="match status" value="1"/>
</dbReference>
<dbReference type="PROSITE" id="PS51278">
    <property type="entry name" value="GATASE_TYPE_2"/>
    <property type="match status" value="1"/>
</dbReference>
<feature type="initiator methionine" description="Removed" evidence="1">
    <location>
        <position position="1"/>
    </location>
</feature>
<feature type="chain" id="PRO_0000056915" description="Asparagine synthetase [glutamine-hydrolyzing]">
    <location>
        <begin position="2"/>
        <end position="561"/>
    </location>
</feature>
<feature type="domain" description="Glutamine amidotransferase type-2" evidence="2">
    <location>
        <begin position="2"/>
        <end position="191"/>
    </location>
</feature>
<feature type="domain" description="Asparagine synthetase">
    <location>
        <begin position="213"/>
        <end position="536"/>
    </location>
</feature>
<feature type="active site" description="For GATase activity" evidence="1">
    <location>
        <position position="2"/>
    </location>
</feature>
<feature type="binding site" evidence="1">
    <location>
        <begin position="49"/>
        <end position="53"/>
    </location>
    <ligand>
        <name>L-glutamine</name>
        <dbReference type="ChEBI" id="CHEBI:58359"/>
    </ligand>
</feature>
<feature type="binding site" evidence="1">
    <location>
        <begin position="75"/>
        <end position="77"/>
    </location>
    <ligand>
        <name>L-glutamine</name>
        <dbReference type="ChEBI" id="CHEBI:58359"/>
    </ligand>
</feature>
<feature type="binding site" evidence="1">
    <location>
        <position position="97"/>
    </location>
    <ligand>
        <name>L-glutamine</name>
        <dbReference type="ChEBI" id="CHEBI:58359"/>
    </ligand>
</feature>
<feature type="binding site" evidence="1">
    <location>
        <position position="256"/>
    </location>
    <ligand>
        <name>ATP</name>
        <dbReference type="ChEBI" id="CHEBI:30616"/>
    </ligand>
</feature>
<feature type="binding site" evidence="1">
    <location>
        <position position="288"/>
    </location>
    <ligand>
        <name>ATP</name>
        <dbReference type="ChEBI" id="CHEBI:30616"/>
    </ligand>
</feature>
<feature type="binding site" evidence="1">
    <location>
        <begin position="363"/>
        <end position="364"/>
    </location>
    <ligand>
        <name>ATP</name>
        <dbReference type="ChEBI" id="CHEBI:30616"/>
    </ligand>
</feature>
<feature type="site" description="Important for beta-aspartyl-AMP intermediate formation" evidence="1">
    <location>
        <position position="365"/>
    </location>
</feature>
<protein>
    <recommendedName>
        <fullName>Asparagine synthetase [glutamine-hydrolyzing]</fullName>
        <ecNumber>6.3.5.4</ecNumber>
    </recommendedName>
    <alternativeName>
        <fullName>Glutamine-dependent asparagine synthetase</fullName>
    </alternativeName>
</protein>
<name>ASNS_CHICK</name>
<gene>
    <name type="primary">ASNS</name>
    <name type="ORF">RCJMB04_15l3</name>
</gene>
<evidence type="ECO:0000250" key="1"/>
<evidence type="ECO:0000255" key="2">
    <source>
        <dbReference type="PROSITE-ProRule" id="PRU00609"/>
    </source>
</evidence>